<protein>
    <recommendedName>
        <fullName evidence="1">3-octaprenyl-4-hydroxybenzoate carboxy-lyase</fullName>
        <ecNumber evidence="1">4.1.1.98</ecNumber>
    </recommendedName>
    <alternativeName>
        <fullName evidence="1">Polyprenyl p-hydroxybenzoate decarboxylase</fullName>
    </alternativeName>
</protein>
<evidence type="ECO:0000255" key="1">
    <source>
        <dbReference type="HAMAP-Rule" id="MF_01636"/>
    </source>
</evidence>
<evidence type="ECO:0000305" key="2"/>
<proteinExistence type="inferred from homology"/>
<dbReference type="EC" id="4.1.1.98" evidence="1"/>
<dbReference type="EMBL" id="CP000800">
    <property type="protein sequence ID" value="ABV16809.1"/>
    <property type="status" value="ALT_INIT"/>
    <property type="molecule type" value="Genomic_DNA"/>
</dbReference>
<dbReference type="SMR" id="A7ZU48"/>
<dbReference type="KEGG" id="ecw:EcE24377A_4362"/>
<dbReference type="HOGENOM" id="CLU_023348_4_1_6"/>
<dbReference type="UniPathway" id="UPA00232"/>
<dbReference type="Proteomes" id="UP000001122">
    <property type="component" value="Chromosome"/>
</dbReference>
<dbReference type="GO" id="GO:0005829">
    <property type="term" value="C:cytosol"/>
    <property type="evidence" value="ECO:0007669"/>
    <property type="project" value="TreeGrafter"/>
</dbReference>
<dbReference type="GO" id="GO:0005886">
    <property type="term" value="C:plasma membrane"/>
    <property type="evidence" value="ECO:0007669"/>
    <property type="project" value="UniProtKB-SubCell"/>
</dbReference>
<dbReference type="GO" id="GO:0008694">
    <property type="term" value="F:3-octaprenyl-4-hydroxybenzoate carboxy-lyase activity"/>
    <property type="evidence" value="ECO:0007669"/>
    <property type="project" value="UniProtKB-UniRule"/>
</dbReference>
<dbReference type="GO" id="GO:0046872">
    <property type="term" value="F:metal ion binding"/>
    <property type="evidence" value="ECO:0007669"/>
    <property type="project" value="UniProtKB-KW"/>
</dbReference>
<dbReference type="GO" id="GO:0006744">
    <property type="term" value="P:ubiquinone biosynthetic process"/>
    <property type="evidence" value="ECO:0007669"/>
    <property type="project" value="UniProtKB-UniRule"/>
</dbReference>
<dbReference type="FunFam" id="1.20.5.570:FF:000001">
    <property type="entry name" value="3-octaprenyl-4-hydroxybenzoate carboxy-lyase"/>
    <property type="match status" value="1"/>
</dbReference>
<dbReference type="FunFam" id="3.40.1670.10:FF:000001">
    <property type="entry name" value="3-octaprenyl-4-hydroxybenzoate carboxy-lyase"/>
    <property type="match status" value="1"/>
</dbReference>
<dbReference type="Gene3D" id="1.20.5.570">
    <property type="entry name" value="Single helix bin"/>
    <property type="match status" value="1"/>
</dbReference>
<dbReference type="Gene3D" id="3.40.1670.10">
    <property type="entry name" value="UbiD C-terminal domain-like"/>
    <property type="match status" value="1"/>
</dbReference>
<dbReference type="HAMAP" id="MF_01636">
    <property type="entry name" value="UbiD"/>
    <property type="match status" value="1"/>
</dbReference>
<dbReference type="InterPro" id="IPR002830">
    <property type="entry name" value="UbiD"/>
</dbReference>
<dbReference type="InterPro" id="IPR049381">
    <property type="entry name" value="UbiD-like_C"/>
</dbReference>
<dbReference type="InterPro" id="IPR049383">
    <property type="entry name" value="UbiD-like_N"/>
</dbReference>
<dbReference type="InterPro" id="IPR023677">
    <property type="entry name" value="UbiD_bacteria"/>
</dbReference>
<dbReference type="InterPro" id="IPR048304">
    <property type="entry name" value="UbiD_Rift_dom"/>
</dbReference>
<dbReference type="NCBIfam" id="NF008175">
    <property type="entry name" value="PRK10922.1"/>
    <property type="match status" value="1"/>
</dbReference>
<dbReference type="NCBIfam" id="TIGR00148">
    <property type="entry name" value="UbiD family decarboxylase"/>
    <property type="match status" value="1"/>
</dbReference>
<dbReference type="PANTHER" id="PTHR30108">
    <property type="entry name" value="3-OCTAPRENYL-4-HYDROXYBENZOATE CARBOXY-LYASE-RELATED"/>
    <property type="match status" value="1"/>
</dbReference>
<dbReference type="PANTHER" id="PTHR30108:SF17">
    <property type="entry name" value="FERULIC ACID DECARBOXYLASE 1"/>
    <property type="match status" value="1"/>
</dbReference>
<dbReference type="Pfam" id="PF01977">
    <property type="entry name" value="UbiD"/>
    <property type="match status" value="1"/>
</dbReference>
<dbReference type="Pfam" id="PF20696">
    <property type="entry name" value="UbiD_C"/>
    <property type="match status" value="1"/>
</dbReference>
<dbReference type="Pfam" id="PF20695">
    <property type="entry name" value="UbiD_N"/>
    <property type="match status" value="1"/>
</dbReference>
<dbReference type="SUPFAM" id="SSF50475">
    <property type="entry name" value="FMN-binding split barrel"/>
    <property type="match status" value="1"/>
</dbReference>
<dbReference type="SUPFAM" id="SSF143968">
    <property type="entry name" value="UbiD C-terminal domain-like"/>
    <property type="match status" value="1"/>
</dbReference>
<name>UBID_ECO24</name>
<reference key="1">
    <citation type="journal article" date="2008" name="J. Bacteriol.">
        <title>The pangenome structure of Escherichia coli: comparative genomic analysis of E. coli commensal and pathogenic isolates.</title>
        <authorList>
            <person name="Rasko D.A."/>
            <person name="Rosovitz M.J."/>
            <person name="Myers G.S.A."/>
            <person name="Mongodin E.F."/>
            <person name="Fricke W.F."/>
            <person name="Gajer P."/>
            <person name="Crabtree J."/>
            <person name="Sebaihia M."/>
            <person name="Thomson N.R."/>
            <person name="Chaudhuri R."/>
            <person name="Henderson I.R."/>
            <person name="Sperandio V."/>
            <person name="Ravel J."/>
        </authorList>
    </citation>
    <scope>NUCLEOTIDE SEQUENCE [LARGE SCALE GENOMIC DNA]</scope>
    <source>
        <strain>E24377A / ETEC</strain>
    </source>
</reference>
<comment type="function">
    <text evidence="1">Catalyzes the decarboxylation of 3-octaprenyl-4-hydroxy benzoate to 2-octaprenylphenol, an intermediate step in ubiquinone biosynthesis.</text>
</comment>
<comment type="catalytic activity">
    <reaction evidence="1">
        <text>a 4-hydroxy-3-(all-trans-polyprenyl)benzoate + H(+) = a 2-(all-trans-polyprenyl)phenol + CO2</text>
        <dbReference type="Rhea" id="RHEA:41680"/>
        <dbReference type="Rhea" id="RHEA-COMP:9514"/>
        <dbReference type="Rhea" id="RHEA-COMP:9516"/>
        <dbReference type="ChEBI" id="CHEBI:1269"/>
        <dbReference type="ChEBI" id="CHEBI:15378"/>
        <dbReference type="ChEBI" id="CHEBI:16526"/>
        <dbReference type="ChEBI" id="CHEBI:78396"/>
        <dbReference type="EC" id="4.1.1.98"/>
    </reaction>
</comment>
<comment type="cofactor">
    <cofactor evidence="1">
        <name>prenylated FMN</name>
        <dbReference type="ChEBI" id="CHEBI:87746"/>
    </cofactor>
    <text evidence="1">Binds 1 prenylated FMN per subunit.</text>
</comment>
<comment type="cofactor">
    <cofactor evidence="1">
        <name>Mn(2+)</name>
        <dbReference type="ChEBI" id="CHEBI:29035"/>
    </cofactor>
</comment>
<comment type="pathway">
    <text evidence="1">Cofactor biosynthesis; ubiquinone biosynthesis.</text>
</comment>
<comment type="subunit">
    <text evidence="1">Homohexamer.</text>
</comment>
<comment type="subcellular location">
    <subcellularLocation>
        <location evidence="1">Cell membrane</location>
        <topology evidence="1">Peripheral membrane protein</topology>
    </subcellularLocation>
</comment>
<comment type="similarity">
    <text evidence="1">Belongs to the UbiD family.</text>
</comment>
<comment type="sequence caution" evidence="2">
    <conflict type="erroneous initiation">
        <sequence resource="EMBL-CDS" id="ABV16809"/>
    </conflict>
</comment>
<gene>
    <name evidence="1" type="primary">ubiD</name>
    <name type="ordered locus">EcE24377A_4362</name>
</gene>
<organism>
    <name type="scientific">Escherichia coli O139:H28 (strain E24377A / ETEC)</name>
    <dbReference type="NCBI Taxonomy" id="331111"/>
    <lineage>
        <taxon>Bacteria</taxon>
        <taxon>Pseudomonadati</taxon>
        <taxon>Pseudomonadota</taxon>
        <taxon>Gammaproteobacteria</taxon>
        <taxon>Enterobacterales</taxon>
        <taxon>Enterobacteriaceae</taxon>
        <taxon>Escherichia</taxon>
    </lineage>
</organism>
<feature type="chain" id="PRO_0000335864" description="3-octaprenyl-4-hydroxybenzoate carboxy-lyase">
    <location>
        <begin position="1"/>
        <end position="494"/>
    </location>
</feature>
<feature type="active site" description="Proton donor" evidence="1">
    <location>
        <position position="287"/>
    </location>
</feature>
<feature type="binding site" evidence="1">
    <location>
        <position position="172"/>
    </location>
    <ligand>
        <name>Mn(2+)</name>
        <dbReference type="ChEBI" id="CHEBI:29035"/>
    </ligand>
</feature>
<feature type="binding site" evidence="1">
    <location>
        <begin position="175"/>
        <end position="177"/>
    </location>
    <ligand>
        <name>prenylated FMN</name>
        <dbReference type="ChEBI" id="CHEBI:87746"/>
    </ligand>
</feature>
<feature type="binding site" evidence="1">
    <location>
        <begin position="189"/>
        <end position="191"/>
    </location>
    <ligand>
        <name>prenylated FMN</name>
        <dbReference type="ChEBI" id="CHEBI:87746"/>
    </ligand>
</feature>
<feature type="binding site" evidence="1">
    <location>
        <begin position="194"/>
        <end position="195"/>
    </location>
    <ligand>
        <name>prenylated FMN</name>
        <dbReference type="ChEBI" id="CHEBI:87746"/>
    </ligand>
</feature>
<feature type="binding site" evidence="1">
    <location>
        <position position="238"/>
    </location>
    <ligand>
        <name>Mn(2+)</name>
        <dbReference type="ChEBI" id="CHEBI:29035"/>
    </ligand>
</feature>
<accession>A7ZU48</accession>
<sequence length="494" mass="55286">MKYNDLRDFLTLLEQQGELKRITLPVDPHLEITEIADRTLRAGGPALLFENPKGYSMPVLCNLFGTPKRVAMGMGQEDVSALREVGKLLAFLKEPEPPKGFRDLFDKLPQFKQVLNMPTKRLRGAPCQQKIVSGDDVDLNRIPIMTCWPEDAAPLITWGLTVTRGPHKERQNLGIYRQQLIGKNKLIMRWLSHRGGALDYQEWCAAHPGERFPVSVALGADPATILGAVTPVPDTLSEYAFAGLLRGTKTEVVKCISNDLEVPASAEIVLEGYIEQGETAPEGPYGDHTGYYNEVDSFPVFTVTHITQREDAIYHSTYTGRPPDEPAVLGVALNEVFVPILQKQFPEIVDFYLPPEGCSYRLAVVTIKKQYAGHAKRVMMGVWSFLRQFMYTKFVIVCDDDVNARDWNDVIWAITTRMDPARDTVLVENTPIDYLDFASPVSGLGSKMGLDATNKWPGETQREWGRPIKKDPDVVAHIDAIWDELAIFNNGKSA</sequence>
<keyword id="KW-1003">Cell membrane</keyword>
<keyword id="KW-0210">Decarboxylase</keyword>
<keyword id="KW-0285">Flavoprotein</keyword>
<keyword id="KW-0288">FMN</keyword>
<keyword id="KW-0456">Lyase</keyword>
<keyword id="KW-0464">Manganese</keyword>
<keyword id="KW-0472">Membrane</keyword>
<keyword id="KW-0479">Metal-binding</keyword>
<keyword id="KW-1185">Reference proteome</keyword>
<keyword id="KW-0831">Ubiquinone biosynthesis</keyword>